<feature type="chain" id="PRO_1000115026" description="Small ribosomal subunit protein uS2">
    <location>
        <begin position="1"/>
        <end position="264"/>
    </location>
</feature>
<keyword id="KW-0687">Ribonucleoprotein</keyword>
<keyword id="KW-0689">Ribosomal protein</keyword>
<protein>
    <recommendedName>
        <fullName evidence="1">Small ribosomal subunit protein uS2</fullName>
    </recommendedName>
    <alternativeName>
        <fullName evidence="2">30S ribosomal protein S2</fullName>
    </alternativeName>
</protein>
<name>RS2_HELP2</name>
<reference key="1">
    <citation type="submission" date="2008-10" db="EMBL/GenBank/DDBJ databases">
        <title>The complete genome sequence of Helicobacter pylori strain P12.</title>
        <authorList>
            <person name="Fischer W."/>
            <person name="Windhager L."/>
            <person name="Karnholz A."/>
            <person name="Zeiller M."/>
            <person name="Zimmer R."/>
            <person name="Haas R."/>
        </authorList>
    </citation>
    <scope>NUCLEOTIDE SEQUENCE [LARGE SCALE GENOMIC DNA]</scope>
    <source>
        <strain>P12</strain>
    </source>
</reference>
<dbReference type="EMBL" id="CP001217">
    <property type="protein sequence ID" value="ACJ08676.1"/>
    <property type="molecule type" value="Genomic_DNA"/>
</dbReference>
<dbReference type="SMR" id="B6JP48"/>
<dbReference type="KEGG" id="hpp:HPP12_1530"/>
<dbReference type="HOGENOM" id="CLU_040318_1_2_7"/>
<dbReference type="Proteomes" id="UP000008198">
    <property type="component" value="Chromosome"/>
</dbReference>
<dbReference type="GO" id="GO:0022627">
    <property type="term" value="C:cytosolic small ribosomal subunit"/>
    <property type="evidence" value="ECO:0007669"/>
    <property type="project" value="TreeGrafter"/>
</dbReference>
<dbReference type="GO" id="GO:0003735">
    <property type="term" value="F:structural constituent of ribosome"/>
    <property type="evidence" value="ECO:0007669"/>
    <property type="project" value="InterPro"/>
</dbReference>
<dbReference type="GO" id="GO:0006412">
    <property type="term" value="P:translation"/>
    <property type="evidence" value="ECO:0007669"/>
    <property type="project" value="UniProtKB-UniRule"/>
</dbReference>
<dbReference type="CDD" id="cd01425">
    <property type="entry name" value="RPS2"/>
    <property type="match status" value="1"/>
</dbReference>
<dbReference type="FunFam" id="1.10.287.610:FF:000001">
    <property type="entry name" value="30S ribosomal protein S2"/>
    <property type="match status" value="1"/>
</dbReference>
<dbReference type="Gene3D" id="3.40.50.10490">
    <property type="entry name" value="Glucose-6-phosphate isomerase like protein, domain 1"/>
    <property type="match status" value="1"/>
</dbReference>
<dbReference type="Gene3D" id="1.10.287.610">
    <property type="entry name" value="Helix hairpin bin"/>
    <property type="match status" value="1"/>
</dbReference>
<dbReference type="HAMAP" id="MF_00291_B">
    <property type="entry name" value="Ribosomal_uS2_B"/>
    <property type="match status" value="1"/>
</dbReference>
<dbReference type="InterPro" id="IPR001865">
    <property type="entry name" value="Ribosomal_uS2"/>
</dbReference>
<dbReference type="InterPro" id="IPR005706">
    <property type="entry name" value="Ribosomal_uS2_bac/mit/plastid"/>
</dbReference>
<dbReference type="InterPro" id="IPR018130">
    <property type="entry name" value="Ribosomal_uS2_CS"/>
</dbReference>
<dbReference type="InterPro" id="IPR023591">
    <property type="entry name" value="Ribosomal_uS2_flav_dom_sf"/>
</dbReference>
<dbReference type="NCBIfam" id="TIGR01011">
    <property type="entry name" value="rpsB_bact"/>
    <property type="match status" value="1"/>
</dbReference>
<dbReference type="PANTHER" id="PTHR12534">
    <property type="entry name" value="30S RIBOSOMAL PROTEIN S2 PROKARYOTIC AND ORGANELLAR"/>
    <property type="match status" value="1"/>
</dbReference>
<dbReference type="PANTHER" id="PTHR12534:SF0">
    <property type="entry name" value="SMALL RIBOSOMAL SUBUNIT PROTEIN US2M"/>
    <property type="match status" value="1"/>
</dbReference>
<dbReference type="Pfam" id="PF00318">
    <property type="entry name" value="Ribosomal_S2"/>
    <property type="match status" value="1"/>
</dbReference>
<dbReference type="PRINTS" id="PR00395">
    <property type="entry name" value="RIBOSOMALS2"/>
</dbReference>
<dbReference type="SUPFAM" id="SSF52313">
    <property type="entry name" value="Ribosomal protein S2"/>
    <property type="match status" value="1"/>
</dbReference>
<dbReference type="PROSITE" id="PS00962">
    <property type="entry name" value="RIBOSOMAL_S2_1"/>
    <property type="match status" value="1"/>
</dbReference>
<dbReference type="PROSITE" id="PS00963">
    <property type="entry name" value="RIBOSOMAL_S2_2"/>
    <property type="match status" value="1"/>
</dbReference>
<accession>B6JP48</accession>
<evidence type="ECO:0000255" key="1">
    <source>
        <dbReference type="HAMAP-Rule" id="MF_00291"/>
    </source>
</evidence>
<evidence type="ECO:0000305" key="2"/>
<gene>
    <name evidence="1" type="primary">rpsB</name>
    <name type="ordered locus">HPP12_1530</name>
</gene>
<proteinExistence type="inferred from homology"/>
<comment type="similarity">
    <text evidence="1">Belongs to the universal ribosomal protein uS2 family.</text>
</comment>
<organism>
    <name type="scientific">Helicobacter pylori (strain P12)</name>
    <dbReference type="NCBI Taxonomy" id="570508"/>
    <lineage>
        <taxon>Bacteria</taxon>
        <taxon>Pseudomonadati</taxon>
        <taxon>Campylobacterota</taxon>
        <taxon>Epsilonproteobacteria</taxon>
        <taxon>Campylobacterales</taxon>
        <taxon>Helicobacteraceae</taxon>
        <taxon>Helicobacter</taxon>
    </lineage>
</organism>
<sequence length="264" mass="30650">MVTMKDLLECGVHFGHQTRRWNPKTKKFIFGVRKNIHIIDLQKTLRYFRYTYNIVRDASAQGKSIMFVGTKKQANETLKEFAESIQVPYVNYRWLGGMLTNFSTIRKSVRKLEIIEEMENSGQIDLLTKKEKLMILRKKEKLDKYLGGVRHMKKIPDMIFVIDVAKEKIAVAEARKLHIPIVAPLDTNCDPDLVDYPIPGNDDAIRSIRLFCKEMSEAILEGRELMQEEIVHADENSEEIEFVSNEEKEEMLAEIQKEITQGAE</sequence>